<keyword id="KW-0067">ATP-binding</keyword>
<keyword id="KW-0131">Cell cycle</keyword>
<keyword id="KW-0132">Cell division</keyword>
<keyword id="KW-0133">Cell shape</keyword>
<keyword id="KW-0961">Cell wall biogenesis/degradation</keyword>
<keyword id="KW-0963">Cytoplasm</keyword>
<keyword id="KW-0436">Ligase</keyword>
<keyword id="KW-0547">Nucleotide-binding</keyword>
<keyword id="KW-0573">Peptidoglycan synthesis</keyword>
<gene>
    <name evidence="1" type="primary">murD</name>
    <name type="ordered locus">SPT_0710</name>
</gene>
<name>MURD_STRZT</name>
<protein>
    <recommendedName>
        <fullName evidence="1">UDP-N-acetylmuramoylalanine--D-glutamate ligase</fullName>
        <ecNumber evidence="1">6.3.2.9</ecNumber>
    </recommendedName>
    <alternativeName>
        <fullName evidence="1">D-glutamic acid-adding enzyme</fullName>
    </alternativeName>
    <alternativeName>
        <fullName evidence="1">UDP-N-acetylmuramoyl-L-alanyl-D-glutamate synthetase</fullName>
    </alternativeName>
</protein>
<proteinExistence type="inferred from homology"/>
<organism>
    <name type="scientific">Streptococcus pneumoniae (strain Taiwan19F-14)</name>
    <dbReference type="NCBI Taxonomy" id="487213"/>
    <lineage>
        <taxon>Bacteria</taxon>
        <taxon>Bacillati</taxon>
        <taxon>Bacillota</taxon>
        <taxon>Bacilli</taxon>
        <taxon>Lactobacillales</taxon>
        <taxon>Streptococcaceae</taxon>
        <taxon>Streptococcus</taxon>
    </lineage>
</organism>
<reference key="1">
    <citation type="journal article" date="2010" name="Genome Biol.">
        <title>Structure and dynamics of the pan-genome of Streptococcus pneumoniae and closely related species.</title>
        <authorList>
            <person name="Donati C."/>
            <person name="Hiller N.L."/>
            <person name="Tettelin H."/>
            <person name="Muzzi A."/>
            <person name="Croucher N.J."/>
            <person name="Angiuoli S.V."/>
            <person name="Oggioni M."/>
            <person name="Dunning Hotopp J.C."/>
            <person name="Hu F.Z."/>
            <person name="Riley D.R."/>
            <person name="Covacci A."/>
            <person name="Mitchell T.J."/>
            <person name="Bentley S.D."/>
            <person name="Kilian M."/>
            <person name="Ehrlich G.D."/>
            <person name="Rappuoli R."/>
            <person name="Moxon E.R."/>
            <person name="Masignani V."/>
        </authorList>
    </citation>
    <scope>NUCLEOTIDE SEQUENCE [LARGE SCALE GENOMIC DNA]</scope>
    <source>
        <strain>Taiwan19F-14</strain>
    </source>
</reference>
<sequence length="450" mass="48459">MKVIDQFKNKKVLVLGLAKSGESAARLLDKLGAIVTVNDGKPFEDNPAAQCLLEEGIKVITGGHPLELLDEEFALMVKNPGIPYNNPMIEKALAKGIPVLTEVELAYLISEAPIIGITGSNGKTTTTTMIGEVLTAAGQHGLLSGNIGYPASQVAQIATDKNTLVMELSSFQLMGVQEFHPEIAVITNLMPTHIDYHGLFEEYVAAKWNIQNKMAAADFLVLNFNQDLAKDLASKTEATVVPFSTLEKVDGAYLEDGQLYFRGEVVMAANEIGVPGSHNVENALATIAVAKLRGVDNQTIKETLSAFGGVKHRLQFVDDIKGVKFYNDSKSTNILATQKALSGFDNSKVVLIAGGLDRGNEFDELVPDITGLKKMVILGQSAERVKRAADKAGVAYVEATDIADATRKAYELATQGDVVLLSPANASWDMYANFEVRGDLFIDTVAELKE</sequence>
<accession>C1CQG4</accession>
<comment type="function">
    <text evidence="1">Cell wall formation. Catalyzes the addition of glutamate to the nucleotide precursor UDP-N-acetylmuramoyl-L-alanine (UMA).</text>
</comment>
<comment type="catalytic activity">
    <reaction evidence="1">
        <text>UDP-N-acetyl-alpha-D-muramoyl-L-alanine + D-glutamate + ATP = UDP-N-acetyl-alpha-D-muramoyl-L-alanyl-D-glutamate + ADP + phosphate + H(+)</text>
        <dbReference type="Rhea" id="RHEA:16429"/>
        <dbReference type="ChEBI" id="CHEBI:15378"/>
        <dbReference type="ChEBI" id="CHEBI:29986"/>
        <dbReference type="ChEBI" id="CHEBI:30616"/>
        <dbReference type="ChEBI" id="CHEBI:43474"/>
        <dbReference type="ChEBI" id="CHEBI:83898"/>
        <dbReference type="ChEBI" id="CHEBI:83900"/>
        <dbReference type="ChEBI" id="CHEBI:456216"/>
        <dbReference type="EC" id="6.3.2.9"/>
    </reaction>
</comment>
<comment type="pathway">
    <text evidence="1">Cell wall biogenesis; peptidoglycan biosynthesis.</text>
</comment>
<comment type="subcellular location">
    <subcellularLocation>
        <location evidence="1">Cytoplasm</location>
    </subcellularLocation>
</comment>
<comment type="similarity">
    <text evidence="1">Belongs to the MurCDEF family.</text>
</comment>
<evidence type="ECO:0000255" key="1">
    <source>
        <dbReference type="HAMAP-Rule" id="MF_00639"/>
    </source>
</evidence>
<dbReference type="EC" id="6.3.2.9" evidence="1"/>
<dbReference type="EMBL" id="CP000921">
    <property type="protein sequence ID" value="ACO24105.1"/>
    <property type="molecule type" value="Genomic_DNA"/>
</dbReference>
<dbReference type="RefSeq" id="WP_000863016.1">
    <property type="nucleotide sequence ID" value="NC_012469.1"/>
</dbReference>
<dbReference type="SMR" id="C1CQG4"/>
<dbReference type="KEGG" id="snt:SPT_0710"/>
<dbReference type="HOGENOM" id="CLU_032540_0_1_9"/>
<dbReference type="UniPathway" id="UPA00219"/>
<dbReference type="GO" id="GO:0005737">
    <property type="term" value="C:cytoplasm"/>
    <property type="evidence" value="ECO:0007669"/>
    <property type="project" value="UniProtKB-SubCell"/>
</dbReference>
<dbReference type="GO" id="GO:0005524">
    <property type="term" value="F:ATP binding"/>
    <property type="evidence" value="ECO:0007669"/>
    <property type="project" value="UniProtKB-UniRule"/>
</dbReference>
<dbReference type="GO" id="GO:0008764">
    <property type="term" value="F:UDP-N-acetylmuramoylalanine-D-glutamate ligase activity"/>
    <property type="evidence" value="ECO:0007669"/>
    <property type="project" value="UniProtKB-UniRule"/>
</dbReference>
<dbReference type="GO" id="GO:0051301">
    <property type="term" value="P:cell division"/>
    <property type="evidence" value="ECO:0007669"/>
    <property type="project" value="UniProtKB-KW"/>
</dbReference>
<dbReference type="GO" id="GO:0071555">
    <property type="term" value="P:cell wall organization"/>
    <property type="evidence" value="ECO:0007669"/>
    <property type="project" value="UniProtKB-KW"/>
</dbReference>
<dbReference type="GO" id="GO:0009252">
    <property type="term" value="P:peptidoglycan biosynthetic process"/>
    <property type="evidence" value="ECO:0007669"/>
    <property type="project" value="UniProtKB-UniRule"/>
</dbReference>
<dbReference type="GO" id="GO:0008360">
    <property type="term" value="P:regulation of cell shape"/>
    <property type="evidence" value="ECO:0007669"/>
    <property type="project" value="UniProtKB-KW"/>
</dbReference>
<dbReference type="Gene3D" id="3.90.190.20">
    <property type="entry name" value="Mur ligase, C-terminal domain"/>
    <property type="match status" value="1"/>
</dbReference>
<dbReference type="Gene3D" id="3.40.1190.10">
    <property type="entry name" value="Mur-like, catalytic domain"/>
    <property type="match status" value="1"/>
</dbReference>
<dbReference type="Gene3D" id="3.40.50.720">
    <property type="entry name" value="NAD(P)-binding Rossmann-like Domain"/>
    <property type="match status" value="1"/>
</dbReference>
<dbReference type="HAMAP" id="MF_00639">
    <property type="entry name" value="MurD"/>
    <property type="match status" value="1"/>
</dbReference>
<dbReference type="InterPro" id="IPR036565">
    <property type="entry name" value="Mur-like_cat_sf"/>
</dbReference>
<dbReference type="InterPro" id="IPR004101">
    <property type="entry name" value="Mur_ligase_C"/>
</dbReference>
<dbReference type="InterPro" id="IPR036615">
    <property type="entry name" value="Mur_ligase_C_dom_sf"/>
</dbReference>
<dbReference type="InterPro" id="IPR013221">
    <property type="entry name" value="Mur_ligase_cen"/>
</dbReference>
<dbReference type="InterPro" id="IPR005762">
    <property type="entry name" value="MurD"/>
</dbReference>
<dbReference type="NCBIfam" id="TIGR01087">
    <property type="entry name" value="murD"/>
    <property type="match status" value="1"/>
</dbReference>
<dbReference type="PANTHER" id="PTHR43692">
    <property type="entry name" value="UDP-N-ACETYLMURAMOYLALANINE--D-GLUTAMATE LIGASE"/>
    <property type="match status" value="1"/>
</dbReference>
<dbReference type="PANTHER" id="PTHR43692:SF1">
    <property type="entry name" value="UDP-N-ACETYLMURAMOYLALANINE--D-GLUTAMATE LIGASE"/>
    <property type="match status" value="1"/>
</dbReference>
<dbReference type="Pfam" id="PF02875">
    <property type="entry name" value="Mur_ligase_C"/>
    <property type="match status" value="1"/>
</dbReference>
<dbReference type="Pfam" id="PF08245">
    <property type="entry name" value="Mur_ligase_M"/>
    <property type="match status" value="1"/>
</dbReference>
<dbReference type="Pfam" id="PF21799">
    <property type="entry name" value="MurD-like_N"/>
    <property type="match status" value="1"/>
</dbReference>
<dbReference type="SUPFAM" id="SSF51984">
    <property type="entry name" value="MurCD N-terminal domain"/>
    <property type="match status" value="1"/>
</dbReference>
<dbReference type="SUPFAM" id="SSF53623">
    <property type="entry name" value="MurD-like peptide ligases, catalytic domain"/>
    <property type="match status" value="1"/>
</dbReference>
<dbReference type="SUPFAM" id="SSF53244">
    <property type="entry name" value="MurD-like peptide ligases, peptide-binding domain"/>
    <property type="match status" value="1"/>
</dbReference>
<feature type="chain" id="PRO_1000191441" description="UDP-N-acetylmuramoylalanine--D-glutamate ligase">
    <location>
        <begin position="1"/>
        <end position="450"/>
    </location>
</feature>
<feature type="binding site" evidence="1">
    <location>
        <begin position="119"/>
        <end position="125"/>
    </location>
    <ligand>
        <name>ATP</name>
        <dbReference type="ChEBI" id="CHEBI:30616"/>
    </ligand>
</feature>